<dbReference type="EMBL" id="BA000033">
    <property type="protein sequence ID" value="BAB95154.1"/>
    <property type="molecule type" value="Genomic_DNA"/>
</dbReference>
<dbReference type="RefSeq" id="WP_000876201.1">
    <property type="nucleotide sequence ID" value="NC_003923.1"/>
</dbReference>
<dbReference type="SMR" id="Q7A0X4"/>
<dbReference type="KEGG" id="sam:MW1289"/>
<dbReference type="HOGENOM" id="CLU_157294_0_0_9"/>
<dbReference type="GO" id="GO:0005886">
    <property type="term" value="C:plasma membrane"/>
    <property type="evidence" value="ECO:0007669"/>
    <property type="project" value="UniProtKB-SubCell"/>
</dbReference>
<dbReference type="NCBIfam" id="NF038270">
    <property type="entry name" value="membran_MsaC"/>
    <property type="match status" value="1"/>
</dbReference>
<reference key="1">
    <citation type="journal article" date="2002" name="Lancet">
        <title>Genome and virulence determinants of high virulence community-acquired MRSA.</title>
        <authorList>
            <person name="Baba T."/>
            <person name="Takeuchi F."/>
            <person name="Kuroda M."/>
            <person name="Yuzawa H."/>
            <person name="Aoki K."/>
            <person name="Oguchi A."/>
            <person name="Nagai Y."/>
            <person name="Iwama N."/>
            <person name="Asano K."/>
            <person name="Naimi T."/>
            <person name="Kuroda H."/>
            <person name="Cui L."/>
            <person name="Yamamoto K."/>
            <person name="Hiramatsu K."/>
        </authorList>
    </citation>
    <scope>NUCLEOTIDE SEQUENCE [LARGE SCALE GENOMIC DNA]</scope>
    <source>
        <strain>MW2</strain>
    </source>
</reference>
<proteinExistence type="inferred from homology"/>
<organism>
    <name type="scientific">Staphylococcus aureus (strain MW2)</name>
    <dbReference type="NCBI Taxonomy" id="196620"/>
    <lineage>
        <taxon>Bacteria</taxon>
        <taxon>Bacillati</taxon>
        <taxon>Bacillota</taxon>
        <taxon>Bacilli</taxon>
        <taxon>Bacillales</taxon>
        <taxon>Staphylococcaceae</taxon>
        <taxon>Staphylococcus</taxon>
    </lineage>
</organism>
<keyword id="KW-1003">Cell membrane</keyword>
<keyword id="KW-0472">Membrane</keyword>
<keyword id="KW-0812">Transmembrane</keyword>
<keyword id="KW-1133">Transmembrane helix</keyword>
<comment type="function">
    <text evidence="1">Accessory element involved in the expression of sarA and several virulence factors. Modulates SarA production and/or function in a strain-dependent manner. Affects the transcription of the accessory gene regulator (agr) and genes encoding virulence factors including alpha toxin (hla) and protein A (spa) (By similarity).</text>
</comment>
<comment type="subcellular location">
    <subcellularLocation>
        <location evidence="3">Cell membrane</location>
        <topology evidence="3">Multi-pass membrane protein</topology>
    </subcellularLocation>
</comment>
<feature type="chain" id="PRO_0000253063" description="Protein msa">
    <location>
        <begin position="1"/>
        <end position="133"/>
    </location>
</feature>
<feature type="transmembrane region" description="Helical" evidence="2">
    <location>
        <begin position="3"/>
        <end position="23"/>
    </location>
</feature>
<feature type="transmembrane region" description="Helical" evidence="2">
    <location>
        <begin position="27"/>
        <end position="47"/>
    </location>
</feature>
<feature type="transmembrane region" description="Helical" evidence="2">
    <location>
        <begin position="55"/>
        <end position="75"/>
    </location>
</feature>
<feature type="transmembrane region" description="Helical" evidence="2">
    <location>
        <begin position="103"/>
        <end position="123"/>
    </location>
</feature>
<accession>Q7A0X4</accession>
<gene>
    <name type="primary">msa</name>
    <name type="ordered locus">MW1289</name>
</gene>
<sequence length="133" mass="15657">MKYLILSLVANLLVFGVLSAIGLNINILAAMMIVLVIPIMISGILFFKTNIDKTYIFFNIIFIDFYYYIYNVHLMTLPKFNNYIKAEMMELEDIDVLITSKDFGFDEILFYTLYLLLILIVLYYLKKQVKHKI</sequence>
<protein>
    <recommendedName>
        <fullName>Protein msa</fullName>
    </recommendedName>
    <alternativeName>
        <fullName>Modulator of SarA</fullName>
    </alternativeName>
</protein>
<name>MSA_STAAW</name>
<evidence type="ECO:0000250" key="1"/>
<evidence type="ECO:0000255" key="2"/>
<evidence type="ECO:0000305" key="3"/>